<organism>
    <name type="scientific">Pseudomonas aeruginosa (strain ATCC 15692 / DSM 22644 / CIP 104116 / JCM 14847 / LMG 12228 / 1C / PRS 101 / PAO1)</name>
    <dbReference type="NCBI Taxonomy" id="208964"/>
    <lineage>
        <taxon>Bacteria</taxon>
        <taxon>Pseudomonadati</taxon>
        <taxon>Pseudomonadota</taxon>
        <taxon>Gammaproteobacteria</taxon>
        <taxon>Pseudomonadales</taxon>
        <taxon>Pseudomonadaceae</taxon>
        <taxon>Pseudomonas</taxon>
    </lineage>
</organism>
<gene>
    <name evidence="4" type="primary">cheR2</name>
    <name type="ordered locus">PA0175</name>
</gene>
<keyword id="KW-0489">Methyltransferase</keyword>
<keyword id="KW-1185">Reference proteome</keyword>
<keyword id="KW-0949">S-adenosyl-L-methionine</keyword>
<keyword id="KW-0808">Transferase</keyword>
<dbReference type="EC" id="2.1.1.80" evidence="3"/>
<dbReference type="EMBL" id="AE004091">
    <property type="protein sequence ID" value="AAG03565.1"/>
    <property type="molecule type" value="Genomic_DNA"/>
</dbReference>
<dbReference type="PIR" id="H83623">
    <property type="entry name" value="H83623"/>
</dbReference>
<dbReference type="RefSeq" id="NP_248865.1">
    <property type="nucleotide sequence ID" value="NC_002516.2"/>
</dbReference>
<dbReference type="RefSeq" id="WP_003102222.1">
    <property type="nucleotide sequence ID" value="NZ_QZGE01000015.1"/>
</dbReference>
<dbReference type="SMR" id="Q9I6V7"/>
<dbReference type="FunCoup" id="Q9I6V7">
    <property type="interactions" value="326"/>
</dbReference>
<dbReference type="STRING" id="208964.PA0175"/>
<dbReference type="PaxDb" id="208964-PA0175"/>
<dbReference type="DNASU" id="882282"/>
<dbReference type="GeneID" id="882282"/>
<dbReference type="KEGG" id="pae:PA0175"/>
<dbReference type="PATRIC" id="fig|208964.12.peg.181"/>
<dbReference type="PseudoCAP" id="PA0175"/>
<dbReference type="HOGENOM" id="CLU_025854_0_0_6"/>
<dbReference type="InParanoid" id="Q9I6V7"/>
<dbReference type="OrthoDB" id="9816309at2"/>
<dbReference type="PhylomeDB" id="Q9I6V7"/>
<dbReference type="BioCyc" id="PAER208964:G1FZ6-176-MONOMER"/>
<dbReference type="BRENDA" id="2.1.1.80">
    <property type="organism ID" value="5087"/>
</dbReference>
<dbReference type="Proteomes" id="UP000002438">
    <property type="component" value="Chromosome"/>
</dbReference>
<dbReference type="GO" id="GO:0098561">
    <property type="term" value="C:methyl accepting chemotaxis protein complex"/>
    <property type="evidence" value="ECO:0000318"/>
    <property type="project" value="GO_Central"/>
</dbReference>
<dbReference type="GO" id="GO:0008276">
    <property type="term" value="F:protein methyltransferase activity"/>
    <property type="evidence" value="ECO:0000318"/>
    <property type="project" value="GO_Central"/>
</dbReference>
<dbReference type="GO" id="GO:0008983">
    <property type="term" value="F:protein-glutamate O-methyltransferase activity"/>
    <property type="evidence" value="ECO:0007669"/>
    <property type="project" value="UniProtKB-EC"/>
</dbReference>
<dbReference type="GO" id="GO:0006935">
    <property type="term" value="P:chemotaxis"/>
    <property type="evidence" value="ECO:0000318"/>
    <property type="project" value="GO_Central"/>
</dbReference>
<dbReference type="GO" id="GO:0032259">
    <property type="term" value="P:methylation"/>
    <property type="evidence" value="ECO:0007669"/>
    <property type="project" value="UniProtKB-KW"/>
</dbReference>
<dbReference type="CDD" id="cd02440">
    <property type="entry name" value="AdoMet_MTases"/>
    <property type="match status" value="1"/>
</dbReference>
<dbReference type="Gene3D" id="1.10.155.10">
    <property type="entry name" value="Chemotaxis receptor methyltransferase CheR, N-terminal domain"/>
    <property type="match status" value="1"/>
</dbReference>
<dbReference type="Gene3D" id="3.40.50.150">
    <property type="entry name" value="Vaccinia Virus protein VP39"/>
    <property type="match status" value="1"/>
</dbReference>
<dbReference type="InterPro" id="IPR050903">
    <property type="entry name" value="Bact_Chemotaxis_MeTrfase"/>
</dbReference>
<dbReference type="InterPro" id="IPR026024">
    <property type="entry name" value="Chemotaxis_MeTrfase_CheR"/>
</dbReference>
<dbReference type="InterPro" id="IPR022642">
    <property type="entry name" value="CheR_C"/>
</dbReference>
<dbReference type="InterPro" id="IPR000780">
    <property type="entry name" value="CheR_MeTrfase"/>
</dbReference>
<dbReference type="InterPro" id="IPR022641">
    <property type="entry name" value="CheR_N"/>
</dbReference>
<dbReference type="InterPro" id="IPR036804">
    <property type="entry name" value="CheR_N_sf"/>
</dbReference>
<dbReference type="InterPro" id="IPR029063">
    <property type="entry name" value="SAM-dependent_MTases_sf"/>
</dbReference>
<dbReference type="PANTHER" id="PTHR24422">
    <property type="entry name" value="CHEMOTAXIS PROTEIN METHYLTRANSFERASE"/>
    <property type="match status" value="1"/>
</dbReference>
<dbReference type="PANTHER" id="PTHR24422:SF19">
    <property type="entry name" value="CHEMOTAXIS PROTEIN METHYLTRANSFERASE"/>
    <property type="match status" value="1"/>
</dbReference>
<dbReference type="Pfam" id="PF01739">
    <property type="entry name" value="CheR"/>
    <property type="match status" value="1"/>
</dbReference>
<dbReference type="Pfam" id="PF03705">
    <property type="entry name" value="CheR_N"/>
    <property type="match status" value="1"/>
</dbReference>
<dbReference type="PIRSF" id="PIRSF000410">
    <property type="entry name" value="CheR"/>
    <property type="match status" value="1"/>
</dbReference>
<dbReference type="PRINTS" id="PR00996">
    <property type="entry name" value="CHERMTFRASE"/>
</dbReference>
<dbReference type="SMART" id="SM00138">
    <property type="entry name" value="MeTrc"/>
    <property type="match status" value="1"/>
</dbReference>
<dbReference type="SUPFAM" id="SSF47757">
    <property type="entry name" value="Chemotaxis receptor methyltransferase CheR, N-terminal domain"/>
    <property type="match status" value="1"/>
</dbReference>
<dbReference type="SUPFAM" id="SSF53335">
    <property type="entry name" value="S-adenosyl-L-methionine-dependent methyltransferases"/>
    <property type="match status" value="1"/>
</dbReference>
<dbReference type="PROSITE" id="PS50123">
    <property type="entry name" value="CHER"/>
    <property type="match status" value="1"/>
</dbReference>
<comment type="function">
    <text evidence="3">Methylation of the methyl-accepting chemotaxis proteins (MCP) to form gamma-glutamyl methyl ester residues in MCP (PubMed:24714571). It specifically targets the McpB chemoreceptor (PubMed:24714571).</text>
</comment>
<comment type="catalytic activity">
    <reaction evidence="3">
        <text>L-glutamyl-[protein] + S-adenosyl-L-methionine = [protein]-L-glutamate 5-O-methyl ester + S-adenosyl-L-homocysteine</text>
        <dbReference type="Rhea" id="RHEA:24452"/>
        <dbReference type="Rhea" id="RHEA-COMP:10208"/>
        <dbReference type="Rhea" id="RHEA-COMP:10311"/>
        <dbReference type="ChEBI" id="CHEBI:29973"/>
        <dbReference type="ChEBI" id="CHEBI:57856"/>
        <dbReference type="ChEBI" id="CHEBI:59789"/>
        <dbReference type="ChEBI" id="CHEBI:82795"/>
        <dbReference type="EC" id="2.1.1.80"/>
    </reaction>
</comment>
<comment type="subunit">
    <text evidence="3">Interacts with the C-terminal pentapeptide GWEEF of the methyl-accepting chemotaxis protein McpB.</text>
</comment>
<sequence length="280" mass="32029">MPTSTPSPVFGNQEFHYTREDFQQVRERLYRLTGISLAESKAQLVYSRLSRRLRLLRLGSFAEYFTHLDREPGEQQLFVNALTTNLTAFFRERHHFPLLADLARRQLQRHRPLRIWSAAASTGEEPYSIAITLVEALGSFDPPVKIVASDIDTGVLDCARQGVYPLERLEQMPAPLKKRFFLRGTGPNAGKARVVEELRQLVEFRQINLLEADWSIAGELDAIFCRNVMIYFDKPTQTRLLERMVALLRPEGLFFAGHSENFVHASHLVRSVGQTVYSPA</sequence>
<name>CHER2_PSEAE</name>
<feature type="chain" id="PRO_0000176038" description="Chemotaxis protein methyltransferase 2">
    <location>
        <begin position="1"/>
        <end position="280"/>
    </location>
</feature>
<feature type="domain" description="CheR-type methyltransferase" evidence="2">
    <location>
        <begin position="10"/>
        <end position="280"/>
    </location>
</feature>
<feature type="binding site" evidence="1">
    <location>
        <position position="85"/>
    </location>
    <ligand>
        <name>S-adenosyl-L-methionine</name>
        <dbReference type="ChEBI" id="CHEBI:59789"/>
    </ligand>
</feature>
<feature type="binding site" evidence="1">
    <location>
        <position position="87"/>
    </location>
    <ligand>
        <name>S-adenosyl-L-methionine</name>
        <dbReference type="ChEBI" id="CHEBI:59789"/>
    </ligand>
</feature>
<feature type="binding site" evidence="1">
    <location>
        <position position="91"/>
    </location>
    <ligand>
        <name>S-adenosyl-L-methionine</name>
        <dbReference type="ChEBI" id="CHEBI:59789"/>
    </ligand>
</feature>
<feature type="binding site" evidence="1">
    <location>
        <position position="125"/>
    </location>
    <ligand>
        <name>S-adenosyl-L-methionine</name>
        <dbReference type="ChEBI" id="CHEBI:59789"/>
    </ligand>
</feature>
<feature type="binding site" evidence="1">
    <location>
        <position position="150"/>
    </location>
    <ligand>
        <name>S-adenosyl-L-methionine</name>
        <dbReference type="ChEBI" id="CHEBI:59789"/>
    </ligand>
</feature>
<feature type="binding site" evidence="1">
    <location>
        <begin position="208"/>
        <end position="209"/>
    </location>
    <ligand>
        <name>S-adenosyl-L-methionine</name>
        <dbReference type="ChEBI" id="CHEBI:59789"/>
    </ligand>
</feature>
<feature type="binding site" evidence="1">
    <location>
        <begin position="226"/>
        <end position="227"/>
    </location>
    <ligand>
        <name>S-adenosyl-L-methionine</name>
        <dbReference type="ChEBI" id="CHEBI:59789"/>
    </ligand>
</feature>
<feature type="mutagenesis site" description="Abolishes interaction with McpB and its methylation." evidence="3">
    <location>
        <begin position="186"/>
        <end position="188"/>
    </location>
</feature>
<proteinExistence type="evidence at protein level"/>
<protein>
    <recommendedName>
        <fullName>Chemotaxis protein methyltransferase 2</fullName>
        <ecNumber evidence="3">2.1.1.80</ecNumber>
    </recommendedName>
</protein>
<reference key="1">
    <citation type="journal article" date="2000" name="Nature">
        <title>Complete genome sequence of Pseudomonas aeruginosa PAO1, an opportunistic pathogen.</title>
        <authorList>
            <person name="Stover C.K."/>
            <person name="Pham X.-Q.T."/>
            <person name="Erwin A.L."/>
            <person name="Mizoguchi S.D."/>
            <person name="Warrener P."/>
            <person name="Hickey M.J."/>
            <person name="Brinkman F.S.L."/>
            <person name="Hufnagle W.O."/>
            <person name="Kowalik D.J."/>
            <person name="Lagrou M."/>
            <person name="Garber R.L."/>
            <person name="Goltry L."/>
            <person name="Tolentino E."/>
            <person name="Westbrock-Wadman S."/>
            <person name="Yuan Y."/>
            <person name="Brody L.L."/>
            <person name="Coulter S.N."/>
            <person name="Folger K.R."/>
            <person name="Kas A."/>
            <person name="Larbig K."/>
            <person name="Lim R.M."/>
            <person name="Smith K.A."/>
            <person name="Spencer D.H."/>
            <person name="Wong G.K.-S."/>
            <person name="Wu Z."/>
            <person name="Paulsen I.T."/>
            <person name="Reizer J."/>
            <person name="Saier M.H. Jr."/>
            <person name="Hancock R.E.W."/>
            <person name="Lory S."/>
            <person name="Olson M.V."/>
        </authorList>
    </citation>
    <scope>NUCLEOTIDE SEQUENCE [LARGE SCALE GENOMIC DNA]</scope>
    <source>
        <strain>ATCC 15692 / DSM 22644 / CIP 104116 / JCM 14847 / LMG 12228 / 1C / PRS 101 / PAO1</strain>
    </source>
</reference>
<reference key="2">
    <citation type="journal article" date="2014" name="Sci. Signal.">
        <title>Specificity of the CheR2 methyltransferase in Pseudomonas aeruginosa is directed by a C-terminal pentapeptide in the McpB chemoreceptor.</title>
        <authorList>
            <person name="Garcia-Fontana C."/>
            <person name="Corral Lugo A."/>
            <person name="Krell T."/>
        </authorList>
    </citation>
    <scope>FUNCTION</scope>
    <scope>CATALYTIC ACTIVITY</scope>
    <scope>INTERACTION WITH MCPB</scope>
    <scope>MUTAGENESIS OF 186-GLY--ASN-188</scope>
    <source>
        <strain>ATCC 15692 / DSM 22644 / CIP 104116 / JCM 14847 / LMG 12228 / 1C / PRS 101 / PAO1</strain>
    </source>
</reference>
<accession>Q9I6V7</accession>
<evidence type="ECO:0000250" key="1"/>
<evidence type="ECO:0000255" key="2">
    <source>
        <dbReference type="PROSITE-ProRule" id="PRU00051"/>
    </source>
</evidence>
<evidence type="ECO:0000269" key="3">
    <source>
    </source>
</evidence>
<evidence type="ECO:0000303" key="4">
    <source>
    </source>
</evidence>